<proteinExistence type="inferred from homology"/>
<feature type="chain" id="PRO_1000134195" description="ATP synthase gamma chain">
    <location>
        <begin position="1"/>
        <end position="294"/>
    </location>
</feature>
<reference key="1">
    <citation type="journal article" date="2010" name="Stand. Genomic Sci.">
        <title>Complete genome sequence of Rhizobium leguminosarum bv trifolii strain WSM2304, an effective microsymbiont of the South American clover Trifolium polymorphum.</title>
        <authorList>
            <person name="Reeve W."/>
            <person name="O'Hara G."/>
            <person name="Chain P."/>
            <person name="Ardley J."/>
            <person name="Brau L."/>
            <person name="Nandesena K."/>
            <person name="Tiwari R."/>
            <person name="Malfatti S."/>
            <person name="Kiss H."/>
            <person name="Lapidus A."/>
            <person name="Copeland A."/>
            <person name="Nolan M."/>
            <person name="Land M."/>
            <person name="Ivanova N."/>
            <person name="Mavromatis K."/>
            <person name="Markowitz V."/>
            <person name="Kyrpides N."/>
            <person name="Melino V."/>
            <person name="Denton M."/>
            <person name="Yates R."/>
            <person name="Howieson J."/>
        </authorList>
    </citation>
    <scope>NUCLEOTIDE SEQUENCE [LARGE SCALE GENOMIC DNA]</scope>
    <source>
        <strain>WSM2304</strain>
    </source>
</reference>
<dbReference type="EMBL" id="CP001191">
    <property type="protein sequence ID" value="ACI56916.1"/>
    <property type="molecule type" value="Genomic_DNA"/>
</dbReference>
<dbReference type="RefSeq" id="WP_003589852.1">
    <property type="nucleotide sequence ID" value="NC_011369.1"/>
</dbReference>
<dbReference type="SMR" id="B5ZSN8"/>
<dbReference type="STRING" id="395492.Rleg2_3653"/>
<dbReference type="KEGG" id="rlt:Rleg2_3653"/>
<dbReference type="eggNOG" id="COG0224">
    <property type="taxonomic scope" value="Bacteria"/>
</dbReference>
<dbReference type="HOGENOM" id="CLU_050669_0_1_5"/>
<dbReference type="Proteomes" id="UP000008330">
    <property type="component" value="Chromosome"/>
</dbReference>
<dbReference type="GO" id="GO:0005886">
    <property type="term" value="C:plasma membrane"/>
    <property type="evidence" value="ECO:0007669"/>
    <property type="project" value="UniProtKB-SubCell"/>
</dbReference>
<dbReference type="GO" id="GO:0045259">
    <property type="term" value="C:proton-transporting ATP synthase complex"/>
    <property type="evidence" value="ECO:0007669"/>
    <property type="project" value="UniProtKB-KW"/>
</dbReference>
<dbReference type="GO" id="GO:0005524">
    <property type="term" value="F:ATP binding"/>
    <property type="evidence" value="ECO:0007669"/>
    <property type="project" value="UniProtKB-UniRule"/>
</dbReference>
<dbReference type="GO" id="GO:0046933">
    <property type="term" value="F:proton-transporting ATP synthase activity, rotational mechanism"/>
    <property type="evidence" value="ECO:0007669"/>
    <property type="project" value="UniProtKB-UniRule"/>
</dbReference>
<dbReference type="GO" id="GO:0042777">
    <property type="term" value="P:proton motive force-driven plasma membrane ATP synthesis"/>
    <property type="evidence" value="ECO:0007669"/>
    <property type="project" value="UniProtKB-UniRule"/>
</dbReference>
<dbReference type="CDD" id="cd12151">
    <property type="entry name" value="F1-ATPase_gamma"/>
    <property type="match status" value="1"/>
</dbReference>
<dbReference type="FunFam" id="1.10.287.80:FF:000001">
    <property type="entry name" value="ATP synthase gamma chain"/>
    <property type="match status" value="1"/>
</dbReference>
<dbReference type="FunFam" id="1.10.287.80:FF:000003">
    <property type="entry name" value="ATP synthase gamma chain, chloroplastic"/>
    <property type="match status" value="1"/>
</dbReference>
<dbReference type="Gene3D" id="3.40.1380.10">
    <property type="match status" value="1"/>
</dbReference>
<dbReference type="Gene3D" id="1.10.287.80">
    <property type="entry name" value="ATP synthase, gamma subunit, helix hairpin domain"/>
    <property type="match status" value="1"/>
</dbReference>
<dbReference type="HAMAP" id="MF_00815">
    <property type="entry name" value="ATP_synth_gamma_bact"/>
    <property type="match status" value="1"/>
</dbReference>
<dbReference type="InterPro" id="IPR035968">
    <property type="entry name" value="ATP_synth_F1_ATPase_gsu"/>
</dbReference>
<dbReference type="InterPro" id="IPR000131">
    <property type="entry name" value="ATP_synth_F1_gsu"/>
</dbReference>
<dbReference type="InterPro" id="IPR023632">
    <property type="entry name" value="ATP_synth_F1_gsu_CS"/>
</dbReference>
<dbReference type="NCBIfam" id="TIGR01146">
    <property type="entry name" value="ATPsyn_F1gamma"/>
    <property type="match status" value="1"/>
</dbReference>
<dbReference type="NCBIfam" id="NF004146">
    <property type="entry name" value="PRK05621.1-4"/>
    <property type="match status" value="1"/>
</dbReference>
<dbReference type="PANTHER" id="PTHR11693">
    <property type="entry name" value="ATP SYNTHASE GAMMA CHAIN"/>
    <property type="match status" value="1"/>
</dbReference>
<dbReference type="PANTHER" id="PTHR11693:SF22">
    <property type="entry name" value="ATP SYNTHASE SUBUNIT GAMMA, MITOCHONDRIAL"/>
    <property type="match status" value="1"/>
</dbReference>
<dbReference type="Pfam" id="PF00231">
    <property type="entry name" value="ATP-synt"/>
    <property type="match status" value="1"/>
</dbReference>
<dbReference type="PIRSF" id="PIRSF039089">
    <property type="entry name" value="ATP_synthase_gamma"/>
    <property type="match status" value="1"/>
</dbReference>
<dbReference type="PRINTS" id="PR00126">
    <property type="entry name" value="ATPASEGAMMA"/>
</dbReference>
<dbReference type="SUPFAM" id="SSF52943">
    <property type="entry name" value="ATP synthase (F1-ATPase), gamma subunit"/>
    <property type="match status" value="1"/>
</dbReference>
<dbReference type="PROSITE" id="PS00153">
    <property type="entry name" value="ATPASE_GAMMA"/>
    <property type="match status" value="1"/>
</dbReference>
<evidence type="ECO:0000255" key="1">
    <source>
        <dbReference type="HAMAP-Rule" id="MF_00815"/>
    </source>
</evidence>
<sequence>MPSLKDLKNRIASVKATQKITKAMKMVAAAKLRRAQEAAEAARPYSQRMGAVLANIAKAVTDADGAPTLMTGTGKDQVHLLVVCTAERGLCGGFNSQIARFARDHVRKLVAEGKTVKIFTVGKKGYDILRREYASLIIERKELRDVKRIGFENADQIGKRIIDMYAAGEFDVCTLFYSEFKSVISQIPTAQQLIPASTGAVQAEDAAHAGAVYEYEPDPASILEDLIPRNISVQIFRALLENVAGEMGAKMSAMDNATRNAGEMINKLTLSYNRQRQAQITKELIEIISGAEAL</sequence>
<organism>
    <name type="scientific">Rhizobium leguminosarum bv. trifolii (strain WSM2304)</name>
    <dbReference type="NCBI Taxonomy" id="395492"/>
    <lineage>
        <taxon>Bacteria</taxon>
        <taxon>Pseudomonadati</taxon>
        <taxon>Pseudomonadota</taxon>
        <taxon>Alphaproteobacteria</taxon>
        <taxon>Hyphomicrobiales</taxon>
        <taxon>Rhizobiaceae</taxon>
        <taxon>Rhizobium/Agrobacterium group</taxon>
        <taxon>Rhizobium</taxon>
    </lineage>
</organism>
<protein>
    <recommendedName>
        <fullName evidence="1">ATP synthase gamma chain</fullName>
    </recommendedName>
    <alternativeName>
        <fullName evidence="1">ATP synthase F1 sector gamma subunit</fullName>
    </alternativeName>
    <alternativeName>
        <fullName evidence="1">F-ATPase gamma subunit</fullName>
    </alternativeName>
</protein>
<name>ATPG_RHILW</name>
<gene>
    <name evidence="1" type="primary">atpG</name>
    <name type="ordered locus">Rleg2_3653</name>
</gene>
<comment type="function">
    <text evidence="1">Produces ATP from ADP in the presence of a proton gradient across the membrane. The gamma chain is believed to be important in regulating ATPase activity and the flow of protons through the CF(0) complex.</text>
</comment>
<comment type="subunit">
    <text evidence="1">F-type ATPases have 2 components, CF(1) - the catalytic core - and CF(0) - the membrane proton channel. CF(1) has five subunits: alpha(3), beta(3), gamma(1), delta(1), epsilon(1). CF(0) has three main subunits: a, b and c.</text>
</comment>
<comment type="subcellular location">
    <subcellularLocation>
        <location evidence="1">Cell inner membrane</location>
        <topology evidence="1">Peripheral membrane protein</topology>
    </subcellularLocation>
</comment>
<comment type="similarity">
    <text evidence="1">Belongs to the ATPase gamma chain family.</text>
</comment>
<keyword id="KW-0066">ATP synthesis</keyword>
<keyword id="KW-0997">Cell inner membrane</keyword>
<keyword id="KW-1003">Cell membrane</keyword>
<keyword id="KW-0139">CF(1)</keyword>
<keyword id="KW-0375">Hydrogen ion transport</keyword>
<keyword id="KW-0406">Ion transport</keyword>
<keyword id="KW-0472">Membrane</keyword>
<keyword id="KW-1185">Reference proteome</keyword>
<keyword id="KW-0813">Transport</keyword>
<accession>B5ZSN8</accession>